<protein>
    <recommendedName>
        <fullName>Cell fusion protein dni1</fullName>
    </recommendedName>
    <alternativeName>
        <fullName>Delayed minus-nitrogen induction protein 1</fullName>
    </alternativeName>
</protein>
<sequence length="234" mass="25388">MLFLHSVVQGTGTLCTLAAWILLALVMTGCQSSTTSKFQLFSLATNVAQINVGYFNMCVLSANATLICKPQFTGCPGLTSISLTDVRSKFLINEVHPWMIVFSFCVCGVSFLMGVVSSLPLIGRLEFLRNIRISLSFFSFFSILVTALFAHVAVSSFVMAVGNGTQNRVTASLGKKAMIFLWCSMGLVTLTGITDSIILLVTSRTKKIRKTILEKSKVLTPSSSFSSKSSTTKY</sequence>
<feature type="signal peptide" evidence="1">
    <location>
        <begin position="1"/>
        <end position="32"/>
    </location>
</feature>
<feature type="chain" id="PRO_0000352825" description="Cell fusion protein dni1">
    <location>
        <begin position="33"/>
        <end position="234"/>
    </location>
</feature>
<feature type="topological domain" description="Extracellular" evidence="1">
    <location>
        <begin position="33"/>
        <end position="96"/>
    </location>
</feature>
<feature type="transmembrane region" description="Helical" evidence="1">
    <location>
        <begin position="97"/>
        <end position="117"/>
    </location>
</feature>
<feature type="topological domain" description="Cytoplasmic" evidence="1">
    <location>
        <begin position="118"/>
        <end position="132"/>
    </location>
</feature>
<feature type="transmembrane region" description="Helical" evidence="1">
    <location>
        <begin position="133"/>
        <end position="153"/>
    </location>
</feature>
<feature type="topological domain" description="Extracellular" evidence="1">
    <location>
        <begin position="154"/>
        <end position="178"/>
    </location>
</feature>
<feature type="transmembrane region" description="Helical" evidence="1">
    <location>
        <begin position="179"/>
        <end position="199"/>
    </location>
</feature>
<feature type="topological domain" description="Cytoplasmic" evidence="1">
    <location>
        <begin position="200"/>
        <end position="234"/>
    </location>
</feature>
<organism>
    <name type="scientific">Schizosaccharomyces pombe (strain 972 / ATCC 24843)</name>
    <name type="common">Fission yeast</name>
    <dbReference type="NCBI Taxonomy" id="284812"/>
    <lineage>
        <taxon>Eukaryota</taxon>
        <taxon>Fungi</taxon>
        <taxon>Dikarya</taxon>
        <taxon>Ascomycota</taxon>
        <taxon>Taphrinomycotina</taxon>
        <taxon>Schizosaccharomycetes</taxon>
        <taxon>Schizosaccharomycetales</taxon>
        <taxon>Schizosaccharomycetaceae</taxon>
        <taxon>Schizosaccharomyces</taxon>
    </lineage>
</organism>
<dbReference type="EMBL" id="CU329670">
    <property type="protein sequence ID" value="CAB11691.2"/>
    <property type="molecule type" value="Genomic_DNA"/>
</dbReference>
<dbReference type="PIR" id="T38624">
    <property type="entry name" value="T38624"/>
</dbReference>
<dbReference type="RefSeq" id="NP_594007.2">
    <property type="nucleotide sequence ID" value="NM_001019433.1"/>
</dbReference>
<dbReference type="BioGRID" id="279597">
    <property type="interactions" value="3"/>
</dbReference>
<dbReference type="FunCoup" id="O14107">
    <property type="interactions" value="2"/>
</dbReference>
<dbReference type="STRING" id="284812.O14107"/>
<dbReference type="PaxDb" id="4896-SPAC31G5.07.1"/>
<dbReference type="EnsemblFungi" id="SPAC31G5.07.1">
    <property type="protein sequence ID" value="SPAC31G5.07.1:pep"/>
    <property type="gene ID" value="SPAC31G5.07"/>
</dbReference>
<dbReference type="GeneID" id="2543166"/>
<dbReference type="KEGG" id="spo:2543166"/>
<dbReference type="PomBase" id="SPAC31G5.07">
    <property type="gene designation" value="dni1"/>
</dbReference>
<dbReference type="VEuPathDB" id="FungiDB:SPAC31G5.07"/>
<dbReference type="HOGENOM" id="CLU_1185620_0_0_1"/>
<dbReference type="InParanoid" id="O14107"/>
<dbReference type="OMA" id="LPQVHPW"/>
<dbReference type="PRO" id="PR:O14107"/>
<dbReference type="Proteomes" id="UP000002485">
    <property type="component" value="Chromosome I"/>
</dbReference>
<dbReference type="GO" id="GO:0043332">
    <property type="term" value="C:mating projection tip"/>
    <property type="evidence" value="ECO:0000314"/>
    <property type="project" value="PomBase"/>
</dbReference>
<dbReference type="GO" id="GO:0070867">
    <property type="term" value="C:mating projection tip membrane"/>
    <property type="evidence" value="ECO:0000314"/>
    <property type="project" value="PomBase"/>
</dbReference>
<dbReference type="GO" id="GO:0000747">
    <property type="term" value="P:conjugation with cellular fusion"/>
    <property type="evidence" value="ECO:0000318"/>
    <property type="project" value="GO_Central"/>
</dbReference>
<dbReference type="GO" id="GO:0032220">
    <property type="term" value="P:plasma membrane fusion involved in cytogamy"/>
    <property type="evidence" value="ECO:0000315"/>
    <property type="project" value="PomBase"/>
</dbReference>
<dbReference type="GO" id="GO:0007009">
    <property type="term" value="P:plasma membrane organization"/>
    <property type="evidence" value="ECO:0000315"/>
    <property type="project" value="PomBase"/>
</dbReference>
<dbReference type="InterPro" id="IPR033481">
    <property type="entry name" value="Dni1/Fig1"/>
</dbReference>
<dbReference type="PANTHER" id="PTHR28092">
    <property type="entry name" value="FACTOR-INDUCED GENE 1 PROTEIN"/>
    <property type="match status" value="1"/>
</dbReference>
<dbReference type="PANTHER" id="PTHR28092:SF1">
    <property type="entry name" value="FACTOR-INDUCED GENE 1 PROTEIN"/>
    <property type="match status" value="1"/>
</dbReference>
<dbReference type="Pfam" id="PF12351">
    <property type="entry name" value="Fig1"/>
    <property type="match status" value="1"/>
</dbReference>
<keyword id="KW-1003">Cell membrane</keyword>
<keyword id="KW-0472">Membrane</keyword>
<keyword id="KW-1185">Reference proteome</keyword>
<keyword id="KW-0732">Signal</keyword>
<keyword id="KW-0812">Transmembrane</keyword>
<keyword id="KW-1133">Transmembrane helix</keyword>
<reference key="1">
    <citation type="journal article" date="2002" name="Nature">
        <title>The genome sequence of Schizosaccharomyces pombe.</title>
        <authorList>
            <person name="Wood V."/>
            <person name="Gwilliam R."/>
            <person name="Rajandream M.A."/>
            <person name="Lyne M.H."/>
            <person name="Lyne R."/>
            <person name="Stewart A."/>
            <person name="Sgouros J.G."/>
            <person name="Peat N."/>
            <person name="Hayles J."/>
            <person name="Baker S.G."/>
            <person name="Basham D."/>
            <person name="Bowman S."/>
            <person name="Brooks K."/>
            <person name="Brown D."/>
            <person name="Brown S."/>
            <person name="Chillingworth T."/>
            <person name="Churcher C.M."/>
            <person name="Collins M."/>
            <person name="Connor R."/>
            <person name="Cronin A."/>
            <person name="Davis P."/>
            <person name="Feltwell T."/>
            <person name="Fraser A."/>
            <person name="Gentles S."/>
            <person name="Goble A."/>
            <person name="Hamlin N."/>
            <person name="Harris D.E."/>
            <person name="Hidalgo J."/>
            <person name="Hodgson G."/>
            <person name="Holroyd S."/>
            <person name="Hornsby T."/>
            <person name="Howarth S."/>
            <person name="Huckle E.J."/>
            <person name="Hunt S."/>
            <person name="Jagels K."/>
            <person name="James K.D."/>
            <person name="Jones L."/>
            <person name="Jones M."/>
            <person name="Leather S."/>
            <person name="McDonald S."/>
            <person name="McLean J."/>
            <person name="Mooney P."/>
            <person name="Moule S."/>
            <person name="Mungall K.L."/>
            <person name="Murphy L.D."/>
            <person name="Niblett D."/>
            <person name="Odell C."/>
            <person name="Oliver K."/>
            <person name="O'Neil S."/>
            <person name="Pearson D."/>
            <person name="Quail M.A."/>
            <person name="Rabbinowitsch E."/>
            <person name="Rutherford K.M."/>
            <person name="Rutter S."/>
            <person name="Saunders D."/>
            <person name="Seeger K."/>
            <person name="Sharp S."/>
            <person name="Skelton J."/>
            <person name="Simmonds M.N."/>
            <person name="Squares R."/>
            <person name="Squares S."/>
            <person name="Stevens K."/>
            <person name="Taylor K."/>
            <person name="Taylor R.G."/>
            <person name="Tivey A."/>
            <person name="Walsh S.V."/>
            <person name="Warren T."/>
            <person name="Whitehead S."/>
            <person name="Woodward J.R."/>
            <person name="Volckaert G."/>
            <person name="Aert R."/>
            <person name="Robben J."/>
            <person name="Grymonprez B."/>
            <person name="Weltjens I."/>
            <person name="Vanstreels E."/>
            <person name="Rieger M."/>
            <person name="Schaefer M."/>
            <person name="Mueller-Auer S."/>
            <person name="Gabel C."/>
            <person name="Fuchs M."/>
            <person name="Duesterhoeft A."/>
            <person name="Fritzc C."/>
            <person name="Holzer E."/>
            <person name="Moestl D."/>
            <person name="Hilbert H."/>
            <person name="Borzym K."/>
            <person name="Langer I."/>
            <person name="Beck A."/>
            <person name="Lehrach H."/>
            <person name="Reinhardt R."/>
            <person name="Pohl T.M."/>
            <person name="Eger P."/>
            <person name="Zimmermann W."/>
            <person name="Wedler H."/>
            <person name="Wambutt R."/>
            <person name="Purnelle B."/>
            <person name="Goffeau A."/>
            <person name="Cadieu E."/>
            <person name="Dreano S."/>
            <person name="Gloux S."/>
            <person name="Lelaure V."/>
            <person name="Mottier S."/>
            <person name="Galibert F."/>
            <person name="Aves S.J."/>
            <person name="Xiang Z."/>
            <person name="Hunt C."/>
            <person name="Moore K."/>
            <person name="Hurst S.M."/>
            <person name="Lucas M."/>
            <person name="Rochet M."/>
            <person name="Gaillardin C."/>
            <person name="Tallada V.A."/>
            <person name="Garzon A."/>
            <person name="Thode G."/>
            <person name="Daga R.R."/>
            <person name="Cruzado L."/>
            <person name="Jimenez J."/>
            <person name="Sanchez M."/>
            <person name="del Rey F."/>
            <person name="Benito J."/>
            <person name="Dominguez A."/>
            <person name="Revuelta J.L."/>
            <person name="Moreno S."/>
            <person name="Armstrong J."/>
            <person name="Forsburg S.L."/>
            <person name="Cerutti L."/>
            <person name="Lowe T."/>
            <person name="McCombie W.R."/>
            <person name="Paulsen I."/>
            <person name="Potashkin J."/>
            <person name="Shpakovski G.V."/>
            <person name="Ussery D."/>
            <person name="Barrell B.G."/>
            <person name="Nurse P."/>
        </authorList>
    </citation>
    <scope>NUCLEOTIDE SEQUENCE [LARGE SCALE GENOMIC DNA]</scope>
    <source>
        <strain>972 / ATCC 24843</strain>
    </source>
</reference>
<reference key="2">
    <citation type="journal article" date="2009" name="Mol. Microbiol.">
        <title>The tetraspan protein Dni1p is required for correct membrane organization and cell wall remodelling during mating in Schizosaccharomyces pombe.</title>
        <authorList>
            <person name="Clemente-Ramos J.A."/>
            <person name="Martin-Garcia R."/>
            <person name="Sharifmoghadam M.R."/>
            <person name="Konomi M."/>
            <person name="Osumi M."/>
            <person name="Valdivieso M.H."/>
        </authorList>
    </citation>
    <scope>INDUCTION</scope>
    <scope>FUNCTION</scope>
    <scope>SUBCELLULAR LOCATION</scope>
    <scope>DISRUPTION PHENOTYPE</scope>
</reference>
<proteinExistence type="evidence at transcript level"/>
<gene>
    <name type="primary">dni1</name>
    <name type="ORF">SPAC31G5.07</name>
</gene>
<accession>O14107</accession>
<comment type="function">
    <text evidence="2">Cell membrane protein which plays a relevant role in coordinating membrane organization and cell wall remodeling during mating.</text>
</comment>
<comment type="subcellular location">
    <subcellularLocation>
        <location evidence="2">Cell membrane</location>
        <topology evidence="2">Multi-pass membrane protein</topology>
    </subcellularLocation>
    <subcellularLocation>
        <location evidence="2">Cell tip</location>
    </subcellularLocation>
    <text>Localizes to the tip of shmoos which requires fus1, actin and lipid rafts.</text>
</comment>
<comment type="induction">
    <text evidence="2">Expression is induced during mating.</text>
</comment>
<comment type="disruption phenotype">
    <text evidence="2">Leads to a defect in cell fusion trough defective membrane fusion and organization, as well as cell wall remodeling.</text>
</comment>
<comment type="similarity">
    <text evidence="3">Belongs to the SUR7 family.</text>
</comment>
<name>DNI1_SCHPO</name>
<evidence type="ECO:0000255" key="1"/>
<evidence type="ECO:0000269" key="2">
    <source>
    </source>
</evidence>
<evidence type="ECO:0000305" key="3"/>